<proteinExistence type="evidence at protein level"/>
<name>DHML_PARDE</name>
<keyword id="KW-0002">3D-structure</keyword>
<keyword id="KW-1015">Disulfide bond</keyword>
<keyword id="KW-0249">Electron transport</keyword>
<keyword id="KW-0560">Oxidoreductase</keyword>
<keyword id="KW-0574">Periplasm</keyword>
<keyword id="KW-0732">Signal</keyword>
<keyword id="KW-0813">Transport</keyword>
<keyword id="KW-0824">TTQ</keyword>
<comment type="function">
    <text>Methylamine dehydrogenase carries out the oxidation of methylamine. Electrons are passed from methylamine dehydrogenase to amicyanin.</text>
</comment>
<comment type="catalytic activity">
    <reaction>
        <text>2 oxidized [amicyanin] + methylamine + H2O = 2 reduced [amicyanin] + formaldehyde + NH4(+) + 2 H(+)</text>
        <dbReference type="Rhea" id="RHEA:30207"/>
        <dbReference type="Rhea" id="RHEA-COMP:11100"/>
        <dbReference type="Rhea" id="RHEA-COMP:11101"/>
        <dbReference type="ChEBI" id="CHEBI:15377"/>
        <dbReference type="ChEBI" id="CHEBI:15378"/>
        <dbReference type="ChEBI" id="CHEBI:16842"/>
        <dbReference type="ChEBI" id="CHEBI:28938"/>
        <dbReference type="ChEBI" id="CHEBI:29036"/>
        <dbReference type="ChEBI" id="CHEBI:49552"/>
        <dbReference type="ChEBI" id="CHEBI:59338"/>
        <dbReference type="EC" id="1.4.9.1"/>
    </reaction>
</comment>
<comment type="cofactor">
    <cofactor>
        <name>tryptophan tryptophylquinone residue</name>
        <dbReference type="ChEBI" id="CHEBI:20251"/>
    </cofactor>
    <text>Uses a protein-derived tryptophan tryptophylquinone (TTQ) cofactor.</text>
</comment>
<comment type="pathway">
    <text>One-carbon metabolism; methylamine degradation; formaldehyde from methylamine: step 1/1.</text>
</comment>
<comment type="subunit">
    <text evidence="3">Heterotetramer of two light and two heavy chains.</text>
</comment>
<comment type="subcellular location">
    <subcellularLocation>
        <location>Periplasm</location>
    </subcellularLocation>
</comment>
<comment type="PTM">
    <text>Predicted to be exported by the Tat system. The position of the signal peptide cleavage has not been experimentally proven.</text>
</comment>
<comment type="PTM">
    <text>Tryptophan tryptophylquinone (TTQ) is formed by oxidation of the indole ring of a tryptophan to form tryptophylquinone followed by covalent cross-linking with another tryptophan residue.</text>
</comment>
<comment type="similarity">
    <text evidence="4">Belongs to the aromatic amine dehydrogenase light chain family.</text>
</comment>
<evidence type="ECO:0000255" key="1"/>
<evidence type="ECO:0000269" key="2">
    <source>
    </source>
</evidence>
<evidence type="ECO:0000269" key="3">
    <source>
    </source>
</evidence>
<evidence type="ECO:0000305" key="4"/>
<evidence type="ECO:0007829" key="5">
    <source>
        <dbReference type="PDB" id="1MG3"/>
    </source>
</evidence>
<evidence type="ECO:0007829" key="6">
    <source>
        <dbReference type="PDB" id="2BBK"/>
    </source>
</evidence>
<evidence type="ECO:0007829" key="7">
    <source>
        <dbReference type="PDB" id="3RMZ"/>
    </source>
</evidence>
<feature type="signal peptide" description="Tat-type signal" evidence="1">
    <location>
        <begin position="1"/>
        <end position="57"/>
    </location>
</feature>
<feature type="chain" id="PRO_0000025575" description="Methylamine dehydrogenase light chain">
    <location>
        <begin position="58"/>
        <end position="188"/>
    </location>
</feature>
<feature type="modified residue" description="Tryptophylquinone" evidence="2">
    <location>
        <position position="114"/>
    </location>
</feature>
<feature type="disulfide bond">
    <location>
        <begin position="80"/>
        <end position="145"/>
    </location>
</feature>
<feature type="disulfide bond">
    <location>
        <begin position="86"/>
        <end position="118"/>
    </location>
</feature>
<feature type="disulfide bond">
    <location>
        <begin position="93"/>
        <end position="178"/>
    </location>
</feature>
<feature type="disulfide bond">
    <location>
        <begin position="95"/>
        <end position="143"/>
    </location>
</feature>
<feature type="disulfide bond">
    <location>
        <begin position="103"/>
        <end position="134"/>
    </location>
</feature>
<feature type="disulfide bond">
    <location>
        <begin position="135"/>
        <end position="166"/>
    </location>
</feature>
<feature type="cross-link" description="Tryptophan tryptophylquinone (Trp-Trp)" evidence="2">
    <location>
        <begin position="114"/>
        <end position="165"/>
    </location>
</feature>
<feature type="strand" evidence="5">
    <location>
        <begin position="66"/>
        <end position="68"/>
    </location>
</feature>
<feature type="strand" evidence="7">
    <location>
        <begin position="73"/>
        <end position="75"/>
    </location>
</feature>
<feature type="helix" evidence="7">
    <location>
        <begin position="83"/>
        <end position="85"/>
    </location>
</feature>
<feature type="strand" evidence="7">
    <location>
        <begin position="89"/>
        <end position="92"/>
    </location>
</feature>
<feature type="helix" evidence="7">
    <location>
        <begin position="93"/>
        <end position="96"/>
    </location>
</feature>
<feature type="strand" evidence="6">
    <location>
        <begin position="100"/>
        <end position="103"/>
    </location>
</feature>
<feature type="strand" evidence="7">
    <location>
        <begin position="114"/>
        <end position="120"/>
    </location>
</feature>
<feature type="turn" evidence="7">
    <location>
        <begin position="121"/>
        <end position="124"/>
    </location>
</feature>
<feature type="strand" evidence="7">
    <location>
        <begin position="125"/>
        <end position="137"/>
    </location>
</feature>
<feature type="strand" evidence="7">
    <location>
        <begin position="142"/>
        <end position="146"/>
    </location>
</feature>
<feature type="helix" evidence="7">
    <location>
        <begin position="157"/>
        <end position="159"/>
    </location>
</feature>
<feature type="strand" evidence="6">
    <location>
        <begin position="161"/>
        <end position="163"/>
    </location>
</feature>
<feature type="helix" evidence="7">
    <location>
        <begin position="170"/>
        <end position="172"/>
    </location>
</feature>
<feature type="strand" evidence="7">
    <location>
        <begin position="175"/>
        <end position="180"/>
    </location>
</feature>
<feature type="strand" evidence="7">
    <location>
        <begin position="183"/>
        <end position="185"/>
    </location>
</feature>
<sequence length="188" mass="20393">MLGNFRFDDMVEKLSRRVAGQTSRRSVIGKLGTAMLGIGLVPLLPVDRRGRVSRANAADAPAGTDPRAKWVPQDNDIQACDYWRHCSIDGNICDCSGGSLTNCPPGTKLATASWVASCYNPTDGQSYLIAYRDCCGYNVSGRCPCLNTEGELPVYRPEFANDIIWCFGAEDDAMTYHCTISPIVGKAS</sequence>
<protein>
    <recommendedName>
        <fullName>Methylamine dehydrogenase light chain</fullName>
        <shortName>MADH</shortName>
        <ecNumber>1.4.9.1</ecNumber>
    </recommendedName>
    <alternativeName>
        <fullName>Methylamine dehydrogenase (amicyanin)</fullName>
    </alternativeName>
</protein>
<dbReference type="EC" id="1.4.9.1"/>
<dbReference type="EMBL" id="M90098">
    <property type="protein sequence ID" value="AAA25578.1"/>
    <property type="molecule type" value="Genomic_DNA"/>
</dbReference>
<dbReference type="EMBL" id="X55665">
    <property type="protein sequence ID" value="CAA39198.1"/>
    <property type="molecule type" value="Genomic_DNA"/>
</dbReference>
<dbReference type="PIR" id="JH0661">
    <property type="entry name" value="JH0661"/>
</dbReference>
<dbReference type="RefSeq" id="WP_011750953.1">
    <property type="nucleotide sequence ID" value="NZ_PPGA01000007.1"/>
</dbReference>
<dbReference type="PDB" id="1MG2">
    <property type="method" value="X-ray"/>
    <property type="resolution" value="2.25 A"/>
    <property type="chains" value="B/F/J/N=58-188"/>
</dbReference>
<dbReference type="PDB" id="1MG3">
    <property type="method" value="X-ray"/>
    <property type="resolution" value="2.40 A"/>
    <property type="chains" value="B/F/J/N=58-188"/>
</dbReference>
<dbReference type="PDB" id="2BBK">
    <property type="method" value="X-ray"/>
    <property type="resolution" value="1.75 A"/>
    <property type="chains" value="L/M=64-188"/>
</dbReference>
<dbReference type="PDB" id="2GC4">
    <property type="method" value="X-ray"/>
    <property type="resolution" value="1.90 A"/>
    <property type="chains" value="B/F/J/N=58-188"/>
</dbReference>
<dbReference type="PDB" id="2GC7">
    <property type="method" value="X-ray"/>
    <property type="resolution" value="1.90 A"/>
    <property type="chains" value="B/F/J/N=58-188"/>
</dbReference>
<dbReference type="PDB" id="2J55">
    <property type="method" value="X-ray"/>
    <property type="resolution" value="2.15 A"/>
    <property type="chains" value="L/M=58-188"/>
</dbReference>
<dbReference type="PDB" id="2J56">
    <property type="method" value="X-ray"/>
    <property type="resolution" value="2.10 A"/>
    <property type="chains" value="L/M=58-188"/>
</dbReference>
<dbReference type="PDB" id="2J57">
    <property type="method" value="X-ray"/>
    <property type="resolution" value="2.25 A"/>
    <property type="chains" value="K/L/M/N=58-188"/>
</dbReference>
<dbReference type="PDB" id="2MTA">
    <property type="method" value="X-ray"/>
    <property type="resolution" value="2.40 A"/>
    <property type="chains" value="L=64-188"/>
</dbReference>
<dbReference type="PDB" id="3ORV">
    <property type="method" value="X-ray"/>
    <property type="resolution" value="1.91 A"/>
    <property type="chains" value="C/E=58-188"/>
</dbReference>
<dbReference type="PDB" id="3PXS">
    <property type="method" value="X-ray"/>
    <property type="resolution" value="2.22 A"/>
    <property type="chains" value="C/E=58-188"/>
</dbReference>
<dbReference type="PDB" id="3PXT">
    <property type="method" value="X-ray"/>
    <property type="resolution" value="2.16 A"/>
    <property type="chains" value="C/E=58-188"/>
</dbReference>
<dbReference type="PDB" id="3PXW">
    <property type="method" value="X-ray"/>
    <property type="resolution" value="2.11 A"/>
    <property type="chains" value="C/E=58-188"/>
</dbReference>
<dbReference type="PDB" id="3RLM">
    <property type="method" value="X-ray"/>
    <property type="resolution" value="2.13 A"/>
    <property type="chains" value="C/E=58-188"/>
</dbReference>
<dbReference type="PDB" id="3RMZ">
    <property type="method" value="X-ray"/>
    <property type="resolution" value="1.72 A"/>
    <property type="chains" value="C/E=58-188"/>
</dbReference>
<dbReference type="PDB" id="3RN0">
    <property type="method" value="X-ray"/>
    <property type="resolution" value="1.91 A"/>
    <property type="chains" value="C/E=58-188"/>
</dbReference>
<dbReference type="PDB" id="3SLE">
    <property type="method" value="X-ray"/>
    <property type="resolution" value="2.52 A"/>
    <property type="chains" value="C/E=58-188"/>
</dbReference>
<dbReference type="PDB" id="4FA1">
    <property type="method" value="X-ray"/>
    <property type="resolution" value="2.18 A"/>
    <property type="chains" value="C/E=58-188"/>
</dbReference>
<dbReference type="PDB" id="4FA4">
    <property type="method" value="X-ray"/>
    <property type="resolution" value="2.14 A"/>
    <property type="chains" value="C/E=58-188"/>
</dbReference>
<dbReference type="PDB" id="4FA5">
    <property type="method" value="X-ray"/>
    <property type="resolution" value="1.94 A"/>
    <property type="chains" value="C/E=58-188"/>
</dbReference>
<dbReference type="PDB" id="4FA9">
    <property type="method" value="X-ray"/>
    <property type="resolution" value="2.09 A"/>
    <property type="chains" value="C/E=58-188"/>
</dbReference>
<dbReference type="PDB" id="4FAN">
    <property type="method" value="X-ray"/>
    <property type="resolution" value="2.08 A"/>
    <property type="chains" value="C/E=58-188"/>
</dbReference>
<dbReference type="PDB" id="4FAV">
    <property type="method" value="X-ray"/>
    <property type="resolution" value="2.08 A"/>
    <property type="chains" value="C/E=58-188"/>
</dbReference>
<dbReference type="PDB" id="4FB1">
    <property type="method" value="X-ray"/>
    <property type="resolution" value="2.15 A"/>
    <property type="chains" value="C/E=58-188"/>
</dbReference>
<dbReference type="PDB" id="4K3I">
    <property type="method" value="X-ray"/>
    <property type="resolution" value="2.00 A"/>
    <property type="chains" value="C/E=58-188"/>
</dbReference>
<dbReference type="PDB" id="4Y5R">
    <property type="method" value="X-ray"/>
    <property type="resolution" value="2.80 A"/>
    <property type="chains" value="C/E=64-188"/>
</dbReference>
<dbReference type="PDBsum" id="1MG2"/>
<dbReference type="PDBsum" id="1MG3"/>
<dbReference type="PDBsum" id="2BBK"/>
<dbReference type="PDBsum" id="2GC4"/>
<dbReference type="PDBsum" id="2GC7"/>
<dbReference type="PDBsum" id="2J55"/>
<dbReference type="PDBsum" id="2J56"/>
<dbReference type="PDBsum" id="2J57"/>
<dbReference type="PDBsum" id="2MTA"/>
<dbReference type="PDBsum" id="3ORV"/>
<dbReference type="PDBsum" id="3PXS"/>
<dbReference type="PDBsum" id="3PXT"/>
<dbReference type="PDBsum" id="3PXW"/>
<dbReference type="PDBsum" id="3RLM"/>
<dbReference type="PDBsum" id="3RMZ"/>
<dbReference type="PDBsum" id="3RN0"/>
<dbReference type="PDBsum" id="3SLE"/>
<dbReference type="PDBsum" id="4FA1"/>
<dbReference type="PDBsum" id="4FA4"/>
<dbReference type="PDBsum" id="4FA5"/>
<dbReference type="PDBsum" id="4FA9"/>
<dbReference type="PDBsum" id="4FAN"/>
<dbReference type="PDBsum" id="4FAV"/>
<dbReference type="PDBsum" id="4FB1"/>
<dbReference type="PDBsum" id="4K3I"/>
<dbReference type="PDBsum" id="4Y5R"/>
<dbReference type="SMR" id="P22619"/>
<dbReference type="DIP" id="DIP-6254N"/>
<dbReference type="IntAct" id="P22619">
    <property type="interactions" value="1"/>
</dbReference>
<dbReference type="DrugBank" id="DB08646">
    <property type="generic name" value="TRW3-(2-AMINO-3-HYDROXY-PROPYL)-6-(N'-CYCLOHEXYL-HYDRAZINO)OCTAHYDRO-INDOL-7-OL"/>
</dbReference>
<dbReference type="GeneID" id="93454755"/>
<dbReference type="OMA" id="YWRHCSI"/>
<dbReference type="BioCyc" id="MetaCyc:MONOMER-3910"/>
<dbReference type="BRENDA" id="1.4.9.1">
    <property type="organism ID" value="3341"/>
</dbReference>
<dbReference type="SABIO-RK" id="P22619"/>
<dbReference type="UniPathway" id="UPA00895">
    <property type="reaction ID" value="UER00870"/>
</dbReference>
<dbReference type="EvolutionaryTrace" id="P22619"/>
<dbReference type="GO" id="GO:0030288">
    <property type="term" value="C:outer membrane-bounded periplasmic space"/>
    <property type="evidence" value="ECO:0007669"/>
    <property type="project" value="InterPro"/>
</dbReference>
<dbReference type="GO" id="GO:0030058">
    <property type="term" value="F:aliphatic amine dehydrogenase activity"/>
    <property type="evidence" value="ECO:0007669"/>
    <property type="project" value="InterPro"/>
</dbReference>
<dbReference type="GO" id="GO:0052876">
    <property type="term" value="F:methylamine dehydrogenase (amicyanin) activity"/>
    <property type="evidence" value="ECO:0007669"/>
    <property type="project" value="UniProtKB-EC"/>
</dbReference>
<dbReference type="GO" id="GO:0009308">
    <property type="term" value="P:amine metabolic process"/>
    <property type="evidence" value="ECO:0007669"/>
    <property type="project" value="InterPro"/>
</dbReference>
<dbReference type="Gene3D" id="2.60.30.10">
    <property type="entry name" value="Methylamine/Aralkylamine dehydrogenase light chain"/>
    <property type="match status" value="1"/>
</dbReference>
<dbReference type="InterPro" id="IPR016008">
    <property type="entry name" value="Amine_DH_Ltc"/>
</dbReference>
<dbReference type="InterPro" id="IPR036560">
    <property type="entry name" value="MADH/AADH_L_sf"/>
</dbReference>
<dbReference type="InterPro" id="IPR013504">
    <property type="entry name" value="MADH/AADH_Ltc_C_dom"/>
</dbReference>
<dbReference type="InterPro" id="IPR004229">
    <property type="entry name" value="MeN_DH_Ltc"/>
</dbReference>
<dbReference type="NCBIfam" id="TIGR02659">
    <property type="entry name" value="TTQ_MADH_Lt"/>
    <property type="match status" value="1"/>
</dbReference>
<dbReference type="Pfam" id="PF02975">
    <property type="entry name" value="Me-amine-dh_L"/>
    <property type="match status" value="1"/>
</dbReference>
<dbReference type="PIRSF" id="PIRSF000192">
    <property type="entry name" value="Amine_dh_beta"/>
    <property type="match status" value="1"/>
</dbReference>
<dbReference type="SUPFAM" id="SSF57561">
    <property type="entry name" value="Methylamine dehydrogenase, L chain"/>
    <property type="match status" value="1"/>
</dbReference>
<organism>
    <name type="scientific">Paracoccus denitrificans</name>
    <dbReference type="NCBI Taxonomy" id="266"/>
    <lineage>
        <taxon>Bacteria</taxon>
        <taxon>Pseudomonadati</taxon>
        <taxon>Pseudomonadota</taxon>
        <taxon>Alphaproteobacteria</taxon>
        <taxon>Rhodobacterales</taxon>
        <taxon>Paracoccaceae</taxon>
        <taxon>Paracoccus</taxon>
    </lineage>
</organism>
<accession>P22619</accession>
<gene>
    <name type="primary">mauA</name>
</gene>
<reference key="1">
    <citation type="journal article" date="1992" name="Biochem. Biophys. Res. Commun.">
        <title>The genetic organization of the mau gene cluster of the facultative autotroph Paracoccus denitrificans.</title>
        <authorList>
            <person name="Chistoserdov A.Y."/>
            <person name="Boyd J."/>
            <person name="Mathews F.S."/>
            <person name="Lidstrom M.E."/>
        </authorList>
    </citation>
    <scope>NUCLEOTIDE SEQUENCE [GENOMIC DNA]</scope>
</reference>
<reference key="2">
    <citation type="journal article" date="1990" name="FEBS Lett.">
        <title>Mutagenesis of the gene encoding amicyanin of Paracoccus denitrificans and the resultant effect on methylamine oxidation.</title>
        <authorList>
            <person name="van Spanning R.J.M."/>
            <person name="Wansell C.W."/>
            <person name="Reijnders W.N.M."/>
            <person name="Oltmann L.F."/>
            <person name="Stouthamer A.H."/>
        </authorList>
    </citation>
    <scope>NUCLEOTIDE SEQUENCE [GENOMIC DNA] OF 158-188</scope>
    <source>
        <strain>ATCC 19367 / NBRC 13301 / NCIMB 8944 / NRRL B-3785</strain>
    </source>
</reference>
<reference key="3">
    <citation type="journal article" date="1992" name="Proteins">
        <title>Three-dimensional structure of the quinoprotein methylamine dehydrogenase from Paracoccus denitrificans determined by molecular replacement at 2.8-A resolution.</title>
        <authorList>
            <person name="Chen L."/>
            <person name="Mathews F.S."/>
            <person name="Davidson V.L."/>
            <person name="Huizinga E.G."/>
            <person name="Vellieux F.M.D."/>
            <person name="Hol W.G.J."/>
        </authorList>
    </citation>
    <scope>X-RAY CRYSTALLOGRAPHY (2.8 ANGSTROMS) OF 64-188</scope>
</reference>
<reference key="4">
    <citation type="journal article" date="1992" name="Biochemistry">
        <title>Crystal structure of an electron-transfer complex between methylamine dehydrogenase and amicyanin.</title>
        <authorList>
            <person name="Chen L."/>
            <person name="Durley R."/>
            <person name="Poliks B.J."/>
            <person name="Hamada K."/>
            <person name="Chen Z."/>
            <person name="Mathews F.S."/>
            <person name="Davidson V.L."/>
            <person name="Satow Y."/>
            <person name="Huizinga E.G."/>
            <person name="Vellieux F.M.D."/>
            <person name="Hol W.G.J."/>
        </authorList>
    </citation>
    <scope>X-RAY CRYSTALLOGRAPHY (2.5 ANGSTROMS) OF 64-188 IN COMPLEX WITH AMICYANIN</scope>
</reference>
<reference key="5">
    <citation type="journal article" date="1994" name="Science">
        <title>Structure of an electron transfer complex: methylamine dehydrogenase, amicyanin, and cytochrome c551i.</title>
        <authorList>
            <person name="Chen L."/>
            <person name="Durley R."/>
            <person name="Mathews F.S."/>
            <person name="Davidson V.L."/>
        </authorList>
    </citation>
    <scope>X-RAY CRYSTALLOGRAPHY (2.4 ANGSTROMS)</scope>
</reference>